<dbReference type="EMBL" id="CP001158">
    <property type="protein sequence ID" value="ACL29990.1"/>
    <property type="molecule type" value="Genomic_DNA"/>
</dbReference>
<dbReference type="RefSeq" id="WP_009874128.1">
    <property type="nucleotide sequence ID" value="NC_011834.1"/>
</dbReference>
<dbReference type="SMR" id="B8D775"/>
<dbReference type="KEGG" id="bau:BUAPTUC7_169"/>
<dbReference type="HOGENOM" id="CLU_036856_0_1_6"/>
<dbReference type="GO" id="GO:0005737">
    <property type="term" value="C:cytoplasm"/>
    <property type="evidence" value="ECO:0007669"/>
    <property type="project" value="UniProtKB-SubCell"/>
</dbReference>
<dbReference type="GO" id="GO:0016149">
    <property type="term" value="F:translation release factor activity, codon specific"/>
    <property type="evidence" value="ECO:0007669"/>
    <property type="project" value="UniProtKB-UniRule"/>
</dbReference>
<dbReference type="FunFam" id="3.30.160.20:FF:000004">
    <property type="entry name" value="Peptide chain release factor 1"/>
    <property type="match status" value="1"/>
</dbReference>
<dbReference type="FunFam" id="3.30.70.1660:FF:000002">
    <property type="entry name" value="Peptide chain release factor 1"/>
    <property type="match status" value="1"/>
</dbReference>
<dbReference type="FunFam" id="3.30.70.1660:FF:000004">
    <property type="entry name" value="Peptide chain release factor 1"/>
    <property type="match status" value="1"/>
</dbReference>
<dbReference type="Gene3D" id="3.30.160.20">
    <property type="match status" value="1"/>
</dbReference>
<dbReference type="Gene3D" id="3.30.70.1660">
    <property type="match status" value="1"/>
</dbReference>
<dbReference type="Gene3D" id="6.10.140.1950">
    <property type="match status" value="1"/>
</dbReference>
<dbReference type="HAMAP" id="MF_00093">
    <property type="entry name" value="Rel_fac_1"/>
    <property type="match status" value="1"/>
</dbReference>
<dbReference type="InterPro" id="IPR005139">
    <property type="entry name" value="PCRF"/>
</dbReference>
<dbReference type="InterPro" id="IPR000352">
    <property type="entry name" value="Pep_chain_release_fac_I"/>
</dbReference>
<dbReference type="InterPro" id="IPR045853">
    <property type="entry name" value="Pep_chain_release_fac_I_sf"/>
</dbReference>
<dbReference type="InterPro" id="IPR050057">
    <property type="entry name" value="Prokaryotic/Mito_RF"/>
</dbReference>
<dbReference type="InterPro" id="IPR004373">
    <property type="entry name" value="RF-1"/>
</dbReference>
<dbReference type="NCBIfam" id="TIGR00019">
    <property type="entry name" value="prfA"/>
    <property type="match status" value="1"/>
</dbReference>
<dbReference type="NCBIfam" id="NF001859">
    <property type="entry name" value="PRK00591.1"/>
    <property type="match status" value="1"/>
</dbReference>
<dbReference type="PANTHER" id="PTHR43804">
    <property type="entry name" value="LD18447P"/>
    <property type="match status" value="1"/>
</dbReference>
<dbReference type="PANTHER" id="PTHR43804:SF7">
    <property type="entry name" value="LD18447P"/>
    <property type="match status" value="1"/>
</dbReference>
<dbReference type="Pfam" id="PF03462">
    <property type="entry name" value="PCRF"/>
    <property type="match status" value="1"/>
</dbReference>
<dbReference type="Pfam" id="PF00472">
    <property type="entry name" value="RF-1"/>
    <property type="match status" value="1"/>
</dbReference>
<dbReference type="SMART" id="SM00937">
    <property type="entry name" value="PCRF"/>
    <property type="match status" value="1"/>
</dbReference>
<dbReference type="SUPFAM" id="SSF75620">
    <property type="entry name" value="Release factor"/>
    <property type="match status" value="1"/>
</dbReference>
<dbReference type="PROSITE" id="PS00745">
    <property type="entry name" value="RF_PROK_I"/>
    <property type="match status" value="1"/>
</dbReference>
<sequence length="361" mass="41262">MNNSILNKLKSLRNRYQEIEIMLTQKNVISNRENLKTLSKEYLKLSEIIKYFIEWEKLEVDIENVNILLNDVEIQGMAEEELYFFNKKKKALEKKINQLLLPEDPNDKHSCFIEIRSATGGDESSIFAGELFRMYLRYAESYSWKVEIMNTSESEKGGFKEIIAKITGRGACGRLKFESGGHRVQRVPETESQGRIHTSTCTVAVMPVTPKTEKEEINSSDLKIDTFRSSGAGGQHVNTTDSAIRITHIPTGNVVECQDERSQHKNKAKALSILSARVYAAKLEKDRQESSSMRKILLGTGERSDRNRTYNFPQNRITDHRINLSIYKLDEVLQGKLDLLIDPIIQEYQADMLSSLSKSES</sequence>
<keyword id="KW-0963">Cytoplasm</keyword>
<keyword id="KW-0488">Methylation</keyword>
<keyword id="KW-0648">Protein biosynthesis</keyword>
<reference key="1">
    <citation type="journal article" date="2009" name="Science">
        <title>The dynamics and time scale of ongoing genomic erosion in symbiotic bacteria.</title>
        <authorList>
            <person name="Moran N.A."/>
            <person name="McLaughlin H.J."/>
            <person name="Sorek R."/>
        </authorList>
    </citation>
    <scope>NUCLEOTIDE SEQUENCE [LARGE SCALE GENOMIC DNA]</scope>
    <source>
        <strain>Tuc7</strain>
    </source>
</reference>
<name>RF1_BUCAT</name>
<feature type="chain" id="PRO_1000193477" description="Peptide chain release factor 1">
    <location>
        <begin position="1"/>
        <end position="361"/>
    </location>
</feature>
<feature type="modified residue" description="N5-methylglutamine" evidence="1">
    <location>
        <position position="235"/>
    </location>
</feature>
<comment type="function">
    <text evidence="1">Peptide chain release factor 1 directs the termination of translation in response to the peptide chain termination codons UAG and UAA.</text>
</comment>
<comment type="subcellular location">
    <subcellularLocation>
        <location evidence="1">Cytoplasm</location>
    </subcellularLocation>
</comment>
<comment type="PTM">
    <text evidence="1">Methylated by PrmC. Methylation increases the termination efficiency of RF1.</text>
</comment>
<comment type="similarity">
    <text evidence="1">Belongs to the prokaryotic/mitochondrial release factor family.</text>
</comment>
<accession>B8D775</accession>
<evidence type="ECO:0000255" key="1">
    <source>
        <dbReference type="HAMAP-Rule" id="MF_00093"/>
    </source>
</evidence>
<gene>
    <name evidence="1" type="primary">prfA</name>
    <name type="ordered locus">BUAPTUC7_169</name>
</gene>
<organism>
    <name type="scientific">Buchnera aphidicola subsp. Acyrthosiphon pisum (strain Tuc7)</name>
    <dbReference type="NCBI Taxonomy" id="561501"/>
    <lineage>
        <taxon>Bacteria</taxon>
        <taxon>Pseudomonadati</taxon>
        <taxon>Pseudomonadota</taxon>
        <taxon>Gammaproteobacteria</taxon>
        <taxon>Enterobacterales</taxon>
        <taxon>Erwiniaceae</taxon>
        <taxon>Buchnera</taxon>
    </lineage>
</organism>
<proteinExistence type="inferred from homology"/>
<protein>
    <recommendedName>
        <fullName evidence="1">Peptide chain release factor 1</fullName>
        <shortName evidence="1">RF-1</shortName>
    </recommendedName>
</protein>